<feature type="signal peptide" evidence="2">
    <location>
        <begin position="1"/>
        <end position="28"/>
    </location>
</feature>
<feature type="chain" id="PRO_0000030713" description="RING-H2 finger protein ATL32">
    <location>
        <begin position="29"/>
        <end position="323"/>
    </location>
</feature>
<feature type="transmembrane region" description="Helical" evidence="2">
    <location>
        <begin position="47"/>
        <end position="67"/>
    </location>
</feature>
<feature type="zinc finger region" description="RING-type; atypical" evidence="3">
    <location>
        <begin position="124"/>
        <end position="166"/>
    </location>
</feature>
<feature type="region of interest" description="Disordered" evidence="4">
    <location>
        <begin position="210"/>
        <end position="229"/>
    </location>
</feature>
<dbReference type="EC" id="2.3.2.27" evidence="5"/>
<dbReference type="EMBL" id="AL035708">
    <property type="protein sequence ID" value="CAB38920.2"/>
    <property type="status" value="ALT_INIT"/>
    <property type="molecule type" value="Genomic_DNA"/>
</dbReference>
<dbReference type="EMBL" id="AL161596">
    <property type="protein sequence ID" value="CAB80670.1"/>
    <property type="status" value="ALT_INIT"/>
    <property type="molecule type" value="Genomic_DNA"/>
</dbReference>
<dbReference type="EMBL" id="CP002687">
    <property type="protein sequence ID" value="AEE87164.1"/>
    <property type="molecule type" value="Genomic_DNA"/>
</dbReference>
<dbReference type="EMBL" id="AF419600">
    <property type="protein sequence ID" value="AAL31932.1"/>
    <property type="status" value="ALT_INIT"/>
    <property type="molecule type" value="mRNA"/>
</dbReference>
<dbReference type="EMBL" id="BT000540">
    <property type="protein sequence ID" value="AAN18109.1"/>
    <property type="molecule type" value="mRNA"/>
</dbReference>
<dbReference type="PIR" id="H85474">
    <property type="entry name" value="H85474"/>
</dbReference>
<dbReference type="PIR" id="T06113">
    <property type="entry name" value="T06113"/>
</dbReference>
<dbReference type="RefSeq" id="NP_568080.2">
    <property type="nucleotide sequence ID" value="NM_120172.3"/>
</dbReference>
<dbReference type="SMR" id="Q8W571"/>
<dbReference type="BioGRID" id="15450">
    <property type="interactions" value="1"/>
</dbReference>
<dbReference type="STRING" id="3702.Q8W571"/>
<dbReference type="PaxDb" id="3702-AT4G40070.1"/>
<dbReference type="ProteomicsDB" id="246754"/>
<dbReference type="EnsemblPlants" id="AT4G40070.1">
    <property type="protein sequence ID" value="AT4G40070.1"/>
    <property type="gene ID" value="AT4G40070"/>
</dbReference>
<dbReference type="GeneID" id="830170"/>
<dbReference type="Gramene" id="AT4G40070.1">
    <property type="protein sequence ID" value="AT4G40070.1"/>
    <property type="gene ID" value="AT4G40070"/>
</dbReference>
<dbReference type="KEGG" id="ath:AT4G40070"/>
<dbReference type="Araport" id="AT4G40070"/>
<dbReference type="TAIR" id="AT4G40070">
    <property type="gene designation" value="ATL32"/>
</dbReference>
<dbReference type="eggNOG" id="KOG0800">
    <property type="taxonomic scope" value="Eukaryota"/>
</dbReference>
<dbReference type="HOGENOM" id="CLU_035191_1_0_1"/>
<dbReference type="InParanoid" id="Q8W571"/>
<dbReference type="OMA" id="STGHSMI"/>
<dbReference type="PhylomeDB" id="Q8W571"/>
<dbReference type="UniPathway" id="UPA00143"/>
<dbReference type="PRO" id="PR:Q8W571"/>
<dbReference type="Proteomes" id="UP000006548">
    <property type="component" value="Chromosome 4"/>
</dbReference>
<dbReference type="ExpressionAtlas" id="Q8W571">
    <property type="expression patterns" value="baseline and differential"/>
</dbReference>
<dbReference type="GO" id="GO:0016020">
    <property type="term" value="C:membrane"/>
    <property type="evidence" value="ECO:0007669"/>
    <property type="project" value="UniProtKB-SubCell"/>
</dbReference>
<dbReference type="GO" id="GO:0016740">
    <property type="term" value="F:transferase activity"/>
    <property type="evidence" value="ECO:0007669"/>
    <property type="project" value="UniProtKB-KW"/>
</dbReference>
<dbReference type="GO" id="GO:0008270">
    <property type="term" value="F:zinc ion binding"/>
    <property type="evidence" value="ECO:0007669"/>
    <property type="project" value="UniProtKB-KW"/>
</dbReference>
<dbReference type="GO" id="GO:0016567">
    <property type="term" value="P:protein ubiquitination"/>
    <property type="evidence" value="ECO:0007669"/>
    <property type="project" value="UniProtKB-UniPathway"/>
</dbReference>
<dbReference type="CDD" id="cd16461">
    <property type="entry name" value="RING-H2_EL5-like"/>
    <property type="match status" value="1"/>
</dbReference>
<dbReference type="FunFam" id="3.30.40.10:FF:000187">
    <property type="entry name" value="E3 ubiquitin-protein ligase ATL6"/>
    <property type="match status" value="1"/>
</dbReference>
<dbReference type="Gene3D" id="3.30.40.10">
    <property type="entry name" value="Zinc/RING finger domain, C3HC4 (zinc finger)"/>
    <property type="match status" value="1"/>
</dbReference>
<dbReference type="InterPro" id="IPR053238">
    <property type="entry name" value="RING-H2_zinc_finger"/>
</dbReference>
<dbReference type="InterPro" id="IPR001841">
    <property type="entry name" value="Znf_RING"/>
</dbReference>
<dbReference type="InterPro" id="IPR013083">
    <property type="entry name" value="Znf_RING/FYVE/PHD"/>
</dbReference>
<dbReference type="PANTHER" id="PTHR14155">
    <property type="entry name" value="RING FINGER DOMAIN-CONTAINING"/>
    <property type="match status" value="1"/>
</dbReference>
<dbReference type="PANTHER" id="PTHR14155:SF507">
    <property type="entry name" value="RING-H2 FINGER PROTEIN ATL32"/>
    <property type="match status" value="1"/>
</dbReference>
<dbReference type="Pfam" id="PF13639">
    <property type="entry name" value="zf-RING_2"/>
    <property type="match status" value="1"/>
</dbReference>
<dbReference type="SMART" id="SM00184">
    <property type="entry name" value="RING"/>
    <property type="match status" value="1"/>
</dbReference>
<dbReference type="SUPFAM" id="SSF57850">
    <property type="entry name" value="RING/U-box"/>
    <property type="match status" value="1"/>
</dbReference>
<dbReference type="PROSITE" id="PS50089">
    <property type="entry name" value="ZF_RING_2"/>
    <property type="match status" value="1"/>
</dbReference>
<name>ATL32_ARATH</name>
<protein>
    <recommendedName>
        <fullName>RING-H2 finger protein ATL32</fullName>
        <ecNumber evidence="5">2.3.2.27</ecNumber>
    </recommendedName>
    <alternativeName>
        <fullName evidence="5">RING-type E3 ubiquitin transferase ATL32</fullName>
    </alternativeName>
</protein>
<accession>Q8W571</accession>
<accession>Q9SMQ0</accession>
<organism>
    <name type="scientific">Arabidopsis thaliana</name>
    <name type="common">Mouse-ear cress</name>
    <dbReference type="NCBI Taxonomy" id="3702"/>
    <lineage>
        <taxon>Eukaryota</taxon>
        <taxon>Viridiplantae</taxon>
        <taxon>Streptophyta</taxon>
        <taxon>Embryophyta</taxon>
        <taxon>Tracheophyta</taxon>
        <taxon>Spermatophyta</taxon>
        <taxon>Magnoliopsida</taxon>
        <taxon>eudicotyledons</taxon>
        <taxon>Gunneridae</taxon>
        <taxon>Pentapetalae</taxon>
        <taxon>rosids</taxon>
        <taxon>malvids</taxon>
        <taxon>Brassicales</taxon>
        <taxon>Brassicaceae</taxon>
        <taxon>Camelineae</taxon>
        <taxon>Arabidopsis</taxon>
    </lineage>
</organism>
<sequence length="323" mass="36070">MMTRVECFNPHRWIILHVAIIIQSKANAQSFSPSPPDLQTGHTPSKTTVFAVLVTLFFLTGLLSVYIRHCARSNPDSSTRYFRNRANDGSSRRGGLDNAVVESFPVFAYSSVKESKIGSKDLECAICLNELEDHETVRLLPICNHLFHIDCIDTWLYSHATCPVCRSNLTAKSNKPGDEDDGVPLAAMRDHVVVDIETVEVAKSHHRRLSSEISGKFPRSNSTGHSMDRFSDGTERFTLRLPDDVKMRLMAVKGRRLKRTRSFDVDLTAEHYCRSGEESSNTIGSGAKSGRVNWPDRWGLTLFVSKSNSGSVRSQKSNGEPLK</sequence>
<proteinExistence type="evidence at transcript level"/>
<comment type="catalytic activity">
    <reaction evidence="5">
        <text>S-ubiquitinyl-[E2 ubiquitin-conjugating enzyme]-L-cysteine + [acceptor protein]-L-lysine = [E2 ubiquitin-conjugating enzyme]-L-cysteine + N(6)-ubiquitinyl-[acceptor protein]-L-lysine.</text>
        <dbReference type="EC" id="2.3.2.27"/>
    </reaction>
</comment>
<comment type="pathway">
    <text>Protein modification; protein ubiquitination.</text>
</comment>
<comment type="subcellular location">
    <subcellularLocation>
        <location evidence="5">Membrane</location>
        <topology evidence="5">Single-pass membrane protein</topology>
    </subcellularLocation>
</comment>
<comment type="domain">
    <text evidence="1">The RING-type zinc finger domain mediates binding to an E2 ubiquitin-conjugating enzyme.</text>
</comment>
<comment type="similarity">
    <text evidence="5">Belongs to the RING-type zinc finger family. ATL subfamily.</text>
</comment>
<comment type="sequence caution" evidence="5">
    <conflict type="erroneous initiation">
        <sequence resource="EMBL-CDS" id="AAL31932"/>
    </conflict>
    <text>Truncated N-terminus.</text>
</comment>
<comment type="sequence caution" evidence="5">
    <conflict type="erroneous initiation">
        <sequence resource="EMBL-CDS" id="CAB38920"/>
    </conflict>
    <text>Truncated N-terminus.</text>
</comment>
<comment type="sequence caution" evidence="5">
    <conflict type="erroneous initiation">
        <sequence resource="EMBL-CDS" id="CAB80670"/>
    </conflict>
    <text>Truncated N-terminus.</text>
</comment>
<evidence type="ECO:0000250" key="1"/>
<evidence type="ECO:0000255" key="2"/>
<evidence type="ECO:0000255" key="3">
    <source>
        <dbReference type="PROSITE-ProRule" id="PRU00175"/>
    </source>
</evidence>
<evidence type="ECO:0000256" key="4">
    <source>
        <dbReference type="SAM" id="MobiDB-lite"/>
    </source>
</evidence>
<evidence type="ECO:0000305" key="5"/>
<keyword id="KW-0472">Membrane</keyword>
<keyword id="KW-0479">Metal-binding</keyword>
<keyword id="KW-1185">Reference proteome</keyword>
<keyword id="KW-0732">Signal</keyword>
<keyword id="KW-0808">Transferase</keyword>
<keyword id="KW-0812">Transmembrane</keyword>
<keyword id="KW-1133">Transmembrane helix</keyword>
<keyword id="KW-0833">Ubl conjugation pathway</keyword>
<keyword id="KW-0862">Zinc</keyword>
<keyword id="KW-0863">Zinc-finger</keyword>
<reference key="1">
    <citation type="journal article" date="1999" name="Nature">
        <title>Sequence and analysis of chromosome 4 of the plant Arabidopsis thaliana.</title>
        <authorList>
            <person name="Mayer K.F.X."/>
            <person name="Schueller C."/>
            <person name="Wambutt R."/>
            <person name="Murphy G."/>
            <person name="Volckaert G."/>
            <person name="Pohl T."/>
            <person name="Duesterhoeft A."/>
            <person name="Stiekema W."/>
            <person name="Entian K.-D."/>
            <person name="Terryn N."/>
            <person name="Harris B."/>
            <person name="Ansorge W."/>
            <person name="Brandt P."/>
            <person name="Grivell L.A."/>
            <person name="Rieger M."/>
            <person name="Weichselgartner M."/>
            <person name="de Simone V."/>
            <person name="Obermaier B."/>
            <person name="Mache R."/>
            <person name="Mueller M."/>
            <person name="Kreis M."/>
            <person name="Delseny M."/>
            <person name="Puigdomenech P."/>
            <person name="Watson M."/>
            <person name="Schmidtheini T."/>
            <person name="Reichert B."/>
            <person name="Portetelle D."/>
            <person name="Perez-Alonso M."/>
            <person name="Boutry M."/>
            <person name="Bancroft I."/>
            <person name="Vos P."/>
            <person name="Hoheisel J."/>
            <person name="Zimmermann W."/>
            <person name="Wedler H."/>
            <person name="Ridley P."/>
            <person name="Langham S.-A."/>
            <person name="McCullagh B."/>
            <person name="Bilham L."/>
            <person name="Robben J."/>
            <person name="van der Schueren J."/>
            <person name="Grymonprez B."/>
            <person name="Chuang Y.-J."/>
            <person name="Vandenbussche F."/>
            <person name="Braeken M."/>
            <person name="Weltjens I."/>
            <person name="Voet M."/>
            <person name="Bastiaens I."/>
            <person name="Aert R."/>
            <person name="Defoor E."/>
            <person name="Weitzenegger T."/>
            <person name="Bothe G."/>
            <person name="Ramsperger U."/>
            <person name="Hilbert H."/>
            <person name="Braun M."/>
            <person name="Holzer E."/>
            <person name="Brandt A."/>
            <person name="Peters S."/>
            <person name="van Staveren M."/>
            <person name="Dirkse W."/>
            <person name="Mooijman P."/>
            <person name="Klein Lankhorst R."/>
            <person name="Rose M."/>
            <person name="Hauf J."/>
            <person name="Koetter P."/>
            <person name="Berneiser S."/>
            <person name="Hempel S."/>
            <person name="Feldpausch M."/>
            <person name="Lamberth S."/>
            <person name="Van den Daele H."/>
            <person name="De Keyser A."/>
            <person name="Buysshaert C."/>
            <person name="Gielen J."/>
            <person name="Villarroel R."/>
            <person name="De Clercq R."/>
            <person name="van Montagu M."/>
            <person name="Rogers J."/>
            <person name="Cronin A."/>
            <person name="Quail M.A."/>
            <person name="Bray-Allen S."/>
            <person name="Clark L."/>
            <person name="Doggett J."/>
            <person name="Hall S."/>
            <person name="Kay M."/>
            <person name="Lennard N."/>
            <person name="McLay K."/>
            <person name="Mayes R."/>
            <person name="Pettett A."/>
            <person name="Rajandream M.A."/>
            <person name="Lyne M."/>
            <person name="Benes V."/>
            <person name="Rechmann S."/>
            <person name="Borkova D."/>
            <person name="Bloecker H."/>
            <person name="Scharfe M."/>
            <person name="Grimm M."/>
            <person name="Loehnert T.-H."/>
            <person name="Dose S."/>
            <person name="de Haan M."/>
            <person name="Maarse A.C."/>
            <person name="Schaefer M."/>
            <person name="Mueller-Auer S."/>
            <person name="Gabel C."/>
            <person name="Fuchs M."/>
            <person name="Fartmann B."/>
            <person name="Granderath K."/>
            <person name="Dauner D."/>
            <person name="Herzl A."/>
            <person name="Neumann S."/>
            <person name="Argiriou A."/>
            <person name="Vitale D."/>
            <person name="Liguori R."/>
            <person name="Piravandi E."/>
            <person name="Massenet O."/>
            <person name="Quigley F."/>
            <person name="Clabauld G."/>
            <person name="Muendlein A."/>
            <person name="Felber R."/>
            <person name="Schnabl S."/>
            <person name="Hiller R."/>
            <person name="Schmidt W."/>
            <person name="Lecharny A."/>
            <person name="Aubourg S."/>
            <person name="Chefdor F."/>
            <person name="Cooke R."/>
            <person name="Berger C."/>
            <person name="Monfort A."/>
            <person name="Casacuberta E."/>
            <person name="Gibbons T."/>
            <person name="Weber N."/>
            <person name="Vandenbol M."/>
            <person name="Bargues M."/>
            <person name="Terol J."/>
            <person name="Torres A."/>
            <person name="Perez-Perez A."/>
            <person name="Purnelle B."/>
            <person name="Bent E."/>
            <person name="Johnson S."/>
            <person name="Tacon D."/>
            <person name="Jesse T."/>
            <person name="Heijnen L."/>
            <person name="Schwarz S."/>
            <person name="Scholler P."/>
            <person name="Heber S."/>
            <person name="Francs P."/>
            <person name="Bielke C."/>
            <person name="Frishman D."/>
            <person name="Haase D."/>
            <person name="Lemcke K."/>
            <person name="Mewes H.-W."/>
            <person name="Stocker S."/>
            <person name="Zaccaria P."/>
            <person name="Bevan M."/>
            <person name="Wilson R.K."/>
            <person name="de la Bastide M."/>
            <person name="Habermann K."/>
            <person name="Parnell L."/>
            <person name="Dedhia N."/>
            <person name="Gnoj L."/>
            <person name="Schutz K."/>
            <person name="Huang E."/>
            <person name="Spiegel L."/>
            <person name="Sekhon M."/>
            <person name="Murray J."/>
            <person name="Sheet P."/>
            <person name="Cordes M."/>
            <person name="Abu-Threideh J."/>
            <person name="Stoneking T."/>
            <person name="Kalicki J."/>
            <person name="Graves T."/>
            <person name="Harmon G."/>
            <person name="Edwards J."/>
            <person name="Latreille P."/>
            <person name="Courtney L."/>
            <person name="Cloud J."/>
            <person name="Abbott A."/>
            <person name="Scott K."/>
            <person name="Johnson D."/>
            <person name="Minx P."/>
            <person name="Bentley D."/>
            <person name="Fulton B."/>
            <person name="Miller N."/>
            <person name="Greco T."/>
            <person name="Kemp K."/>
            <person name="Kramer J."/>
            <person name="Fulton L."/>
            <person name="Mardis E."/>
            <person name="Dante M."/>
            <person name="Pepin K."/>
            <person name="Hillier L.W."/>
            <person name="Nelson J."/>
            <person name="Spieth J."/>
            <person name="Ryan E."/>
            <person name="Andrews S."/>
            <person name="Geisel C."/>
            <person name="Layman D."/>
            <person name="Du H."/>
            <person name="Ali J."/>
            <person name="Berghoff A."/>
            <person name="Jones K."/>
            <person name="Drone K."/>
            <person name="Cotton M."/>
            <person name="Joshu C."/>
            <person name="Antonoiu B."/>
            <person name="Zidanic M."/>
            <person name="Strong C."/>
            <person name="Sun H."/>
            <person name="Lamar B."/>
            <person name="Yordan C."/>
            <person name="Ma P."/>
            <person name="Zhong J."/>
            <person name="Preston R."/>
            <person name="Vil D."/>
            <person name="Shekher M."/>
            <person name="Matero A."/>
            <person name="Shah R."/>
            <person name="Swaby I.K."/>
            <person name="O'Shaughnessy A."/>
            <person name="Rodriguez M."/>
            <person name="Hoffman J."/>
            <person name="Till S."/>
            <person name="Granat S."/>
            <person name="Shohdy N."/>
            <person name="Hasegawa A."/>
            <person name="Hameed A."/>
            <person name="Lodhi M."/>
            <person name="Johnson A."/>
            <person name="Chen E."/>
            <person name="Marra M.A."/>
            <person name="Martienssen R."/>
            <person name="McCombie W.R."/>
        </authorList>
    </citation>
    <scope>NUCLEOTIDE SEQUENCE [LARGE SCALE GENOMIC DNA]</scope>
    <source>
        <strain>cv. Columbia</strain>
    </source>
</reference>
<reference key="2">
    <citation type="journal article" date="2017" name="Plant J.">
        <title>Araport11: a complete reannotation of the Arabidopsis thaliana reference genome.</title>
        <authorList>
            <person name="Cheng C.Y."/>
            <person name="Krishnakumar V."/>
            <person name="Chan A.P."/>
            <person name="Thibaud-Nissen F."/>
            <person name="Schobel S."/>
            <person name="Town C.D."/>
        </authorList>
    </citation>
    <scope>GENOME REANNOTATION</scope>
    <source>
        <strain>cv. Columbia</strain>
    </source>
</reference>
<reference key="3">
    <citation type="journal article" date="2003" name="Science">
        <title>Empirical analysis of transcriptional activity in the Arabidopsis genome.</title>
        <authorList>
            <person name="Yamada K."/>
            <person name="Lim J."/>
            <person name="Dale J.M."/>
            <person name="Chen H."/>
            <person name="Shinn P."/>
            <person name="Palm C.J."/>
            <person name="Southwick A.M."/>
            <person name="Wu H.C."/>
            <person name="Kim C.J."/>
            <person name="Nguyen M."/>
            <person name="Pham P.K."/>
            <person name="Cheuk R.F."/>
            <person name="Karlin-Newmann G."/>
            <person name="Liu S.X."/>
            <person name="Lam B."/>
            <person name="Sakano H."/>
            <person name="Wu T."/>
            <person name="Yu G."/>
            <person name="Miranda M."/>
            <person name="Quach H.L."/>
            <person name="Tripp M."/>
            <person name="Chang C.H."/>
            <person name="Lee J.M."/>
            <person name="Toriumi M.J."/>
            <person name="Chan M.M."/>
            <person name="Tang C.C."/>
            <person name="Onodera C.S."/>
            <person name="Deng J.M."/>
            <person name="Akiyama K."/>
            <person name="Ansari Y."/>
            <person name="Arakawa T."/>
            <person name="Banh J."/>
            <person name="Banno F."/>
            <person name="Bowser L."/>
            <person name="Brooks S.Y."/>
            <person name="Carninci P."/>
            <person name="Chao Q."/>
            <person name="Choy N."/>
            <person name="Enju A."/>
            <person name="Goldsmith A.D."/>
            <person name="Gurjal M."/>
            <person name="Hansen N.F."/>
            <person name="Hayashizaki Y."/>
            <person name="Johnson-Hopson C."/>
            <person name="Hsuan V.W."/>
            <person name="Iida K."/>
            <person name="Karnes M."/>
            <person name="Khan S."/>
            <person name="Koesema E."/>
            <person name="Ishida J."/>
            <person name="Jiang P.X."/>
            <person name="Jones T."/>
            <person name="Kawai J."/>
            <person name="Kamiya A."/>
            <person name="Meyers C."/>
            <person name="Nakajima M."/>
            <person name="Narusaka M."/>
            <person name="Seki M."/>
            <person name="Sakurai T."/>
            <person name="Satou M."/>
            <person name="Tamse R."/>
            <person name="Vaysberg M."/>
            <person name="Wallender E.K."/>
            <person name="Wong C."/>
            <person name="Yamamura Y."/>
            <person name="Yuan S."/>
            <person name="Shinozaki K."/>
            <person name="Davis R.W."/>
            <person name="Theologis A."/>
            <person name="Ecker J.R."/>
        </authorList>
    </citation>
    <scope>NUCLEOTIDE SEQUENCE [LARGE SCALE MRNA] OF 37-323</scope>
    <source>
        <strain>cv. Columbia</strain>
    </source>
</reference>
<reference key="4">
    <citation type="journal article" date="2002" name="Genome Biol.">
        <title>Evaluation and classification of RING-finger domains encoded by the Arabidopsis genome.</title>
        <authorList>
            <person name="Kosarev P."/>
            <person name="Mayer K.F.X."/>
            <person name="Hardtke C.S."/>
        </authorList>
    </citation>
    <scope>GENE FAMILY ORGANIZATION</scope>
</reference>
<reference key="5">
    <citation type="journal article" date="2006" name="J. Mol. Evol.">
        <title>The ATL gene family from Arabidopsis thaliana and Oryza sativa comprises a large number of putative ubiquitin ligases of the RING-H2 type.</title>
        <authorList>
            <person name="Serrano M."/>
            <person name="Parra S."/>
            <person name="Alcaraz L.D."/>
            <person name="Guzman P."/>
        </authorList>
    </citation>
    <scope>NOMENCLATURE</scope>
    <scope>GENE FAMILY ORGANIZATION</scope>
</reference>
<gene>
    <name type="primary">ATL32</name>
    <name type="ordered locus">At4g40070</name>
    <name type="ORF">T5J17.240</name>
</gene>